<evidence type="ECO:0000255" key="1">
    <source>
        <dbReference type="HAMAP-Rule" id="MF_04064"/>
    </source>
</evidence>
<evidence type="ECO:0000256" key="2">
    <source>
        <dbReference type="SAM" id="MobiDB-lite"/>
    </source>
</evidence>
<dbReference type="EMBL" id="CY009354">
    <property type="protein sequence ID" value="ABE12580.1"/>
    <property type="molecule type" value="Genomic_RNA"/>
</dbReference>
<dbReference type="SMR" id="Q1PUD0"/>
<dbReference type="Proteomes" id="UP000133870">
    <property type="component" value="Genome"/>
</dbReference>
<dbReference type="GO" id="GO:0044164">
    <property type="term" value="C:host cell cytosol"/>
    <property type="evidence" value="ECO:0007669"/>
    <property type="project" value="UniProtKB-SubCell"/>
</dbReference>
<dbReference type="GO" id="GO:0044192">
    <property type="term" value="C:host cell mitochondrial inner membrane"/>
    <property type="evidence" value="ECO:0007669"/>
    <property type="project" value="UniProtKB-SubCell"/>
</dbReference>
<dbReference type="GO" id="GO:0042025">
    <property type="term" value="C:host cell nucleus"/>
    <property type="evidence" value="ECO:0007669"/>
    <property type="project" value="UniProtKB-SubCell"/>
</dbReference>
<dbReference type="GO" id="GO:0016020">
    <property type="term" value="C:membrane"/>
    <property type="evidence" value="ECO:0007669"/>
    <property type="project" value="UniProtKB-UniRule"/>
</dbReference>
<dbReference type="GO" id="GO:0052150">
    <property type="term" value="P:symbiont-mediated perturbation of host apoptosis"/>
    <property type="evidence" value="ECO:0007669"/>
    <property type="project" value="UniProtKB-KW"/>
</dbReference>
<dbReference type="GO" id="GO:0039545">
    <property type="term" value="P:symbiont-mediated suppression of host cytoplasmic pattern recognition receptor signaling pathway via inhibition of MAVS activity"/>
    <property type="evidence" value="ECO:0007669"/>
    <property type="project" value="UniProtKB-KW"/>
</dbReference>
<dbReference type="HAMAP" id="MF_04064">
    <property type="entry name" value="INFV_PB1F2"/>
    <property type="match status" value="1"/>
</dbReference>
<dbReference type="InterPro" id="IPR021045">
    <property type="entry name" value="Flu_proapoptotic_PB1-F2"/>
</dbReference>
<dbReference type="Pfam" id="PF11986">
    <property type="entry name" value="PB1-F2"/>
    <property type="match status" value="1"/>
</dbReference>
<protein>
    <recommendedName>
        <fullName evidence="1">Protein PB1-F2</fullName>
    </recommendedName>
</protein>
<sequence>MEQEQDTPWTQSTEHINIQKKGSGQQTQRLGRPNLTQLMDHYLRIMSQVDMHKQTVSWKQWLSLKNPTQGSLKTRVLKRWKSFNKQGWTD</sequence>
<accession>Q1PUD0</accession>
<organismHost>
    <name type="scientific">Aves</name>
    <dbReference type="NCBI Taxonomy" id="8782"/>
</organismHost>
<organismHost>
    <name type="scientific">Cetacea</name>
    <name type="common">whales</name>
    <dbReference type="NCBI Taxonomy" id="9721"/>
</organismHost>
<organismHost>
    <name type="scientific">Homo sapiens</name>
    <name type="common">Human</name>
    <dbReference type="NCBI Taxonomy" id="9606"/>
</organismHost>
<organismHost>
    <name type="scientific">Phocidae</name>
    <name type="common">true seals</name>
    <dbReference type="NCBI Taxonomy" id="9709"/>
</organismHost>
<organismHost>
    <name type="scientific">Sus scrofa</name>
    <name type="common">Pig</name>
    <dbReference type="NCBI Taxonomy" id="9823"/>
</organismHost>
<comment type="function">
    <text evidence="1">Plays an important role in promoting lung pathology in both primary viral infection and secondary bacterial infection. Promotes alteration of mitochondrial morphology, dissipation of mitochondrial membrane potential, and cell death. Alternatively, inhibits the production of interferon in the infected cell at the level of host mitochondrial antiviral signaling MAVS. Its level of expression differs greatly depending on which cell type is infected, in a manner that is independent of the levels of expression of other viral proteins. Monocytic cells are more affected than epithelial cells. Seems to disable virus-infected monocytes or other host innate immune cells. During early stage of infection, predisposes the mitochondria to permeability transition through interaction with host SLC25A6/ANT3 and VDAC1. These proteins participate in the formation of the permeability transition pore complex (PTPC) responsible of the release of mitochondrial products that triggers apoptosis.</text>
</comment>
<comment type="subunit">
    <text evidence="1">Oligomer. Interacts with human SLC25A6/ANT3 and VDAC1. Interacts with host MAVS.</text>
</comment>
<comment type="subcellular location">
    <subcellularLocation>
        <location evidence="1">Host mitochondrion inner membrane</location>
    </subcellularLocation>
    <subcellularLocation>
        <location evidence="1">Host nucleus</location>
    </subcellularLocation>
    <subcellularLocation>
        <location evidence="1">Host cytoplasm</location>
        <location evidence="1">Host cytosol</location>
    </subcellularLocation>
    <text evidence="1">Inner mitochondrial membrane in most cells types. Otherwise is detected in the nucleus and cytosol.</text>
</comment>
<comment type="miscellaneous">
    <text>Is not encoded in all strains, and seems to be dispensable for replication.</text>
</comment>
<comment type="similarity">
    <text evidence="1">Belongs to the influenza viruses PB1-F2 family.</text>
</comment>
<feature type="chain" id="PRO_0000278721" description="Protein PB1-F2">
    <location>
        <begin position="1"/>
        <end position="90"/>
    </location>
</feature>
<feature type="region of interest" description="Disordered" evidence="2">
    <location>
        <begin position="1"/>
        <end position="31"/>
    </location>
</feature>
<feature type="region of interest" description="Mitochondrial targeting sequence" evidence="1">
    <location>
        <begin position="65"/>
        <end position="87"/>
    </location>
</feature>
<feature type="site" description="Low pathogenicity" evidence="1">
    <location>
        <position position="66"/>
    </location>
</feature>
<proteinExistence type="inferred from homology"/>
<reference key="1">
    <citation type="submission" date="2006-04" db="EMBL/GenBank/DDBJ databases">
        <title>The NIAID influenza genome sequencing project.</title>
        <authorList>
            <person name="Spiro D."/>
            <person name="Ghedin E."/>
            <person name="Sengamalay N."/>
            <person name="Halpin R."/>
            <person name="Boyne A."/>
            <person name="Zaborsky J."/>
            <person name="Feldblyum T."/>
            <person name="Subbu V."/>
            <person name="Sparenborg J."/>
            <person name="Shumway M."/>
            <person name="Sitz J."/>
            <person name="Katzel D."/>
            <person name="Koo H."/>
            <person name="Salzberg S.L."/>
            <person name="Griesemer S."/>
            <person name="St George K."/>
            <person name="Bennett R."/>
            <person name="Taylor J."/>
            <person name="Bennink J.R."/>
            <person name="Yewdell J.W."/>
            <person name="Bao Y."/>
            <person name="Bolotov P."/>
            <person name="Dernovoy D."/>
            <person name="Kiryutin B."/>
            <person name="Lipman D.J."/>
            <person name="Tatusova T."/>
        </authorList>
    </citation>
    <scope>NUCLEOTIDE SEQUENCE [GENOMIC RNA]</scope>
</reference>
<name>PB1F2_I73A5</name>
<gene>
    <name evidence="1" type="primary">PB1</name>
</gene>
<organism>
    <name type="scientific">Influenza A virus (strain A/Port Chalmers/1/1973 H3N2)</name>
    <dbReference type="NCBI Taxonomy" id="385624"/>
    <lineage>
        <taxon>Viruses</taxon>
        <taxon>Riboviria</taxon>
        <taxon>Orthornavirae</taxon>
        <taxon>Negarnaviricota</taxon>
        <taxon>Polyploviricotina</taxon>
        <taxon>Insthoviricetes</taxon>
        <taxon>Articulavirales</taxon>
        <taxon>Orthomyxoviridae</taxon>
        <taxon>Alphainfluenzavirus</taxon>
        <taxon>Alphainfluenzavirus influenzae</taxon>
        <taxon>Influenza A virus</taxon>
    </lineage>
</organism>
<keyword id="KW-0053">Apoptosis</keyword>
<keyword id="KW-1035">Host cytoplasm</keyword>
<keyword id="KW-1043">Host membrane</keyword>
<keyword id="KW-1045">Host mitochondrion</keyword>
<keyword id="KW-1046">Host mitochondrion inner membrane</keyword>
<keyword id="KW-1048">Host nucleus</keyword>
<keyword id="KW-0945">Host-virus interaction</keyword>
<keyword id="KW-1090">Inhibition of host innate immune response by virus</keyword>
<keyword id="KW-1097">Inhibition of host MAVS by virus</keyword>
<keyword id="KW-1113">Inhibition of host RLR pathway by virus</keyword>
<keyword id="KW-0472">Membrane</keyword>
<keyword id="KW-1119">Modulation of host cell apoptosis by virus</keyword>
<keyword id="KW-0899">Viral immunoevasion</keyword>